<comment type="function">
    <text evidence="2">In vitro, is able to catalyze the NADP(+)-dependent oxidation of shikimate to 3-dehydroshikimate. However, has much lower activity than classical shikimate dehydrogenases AroE, indicating that shikimate may not be the biological substrate. Cannot utilize NAD(+) instead of NADP(+). Is not able to catalyze the oxidation of quinate.</text>
</comment>
<comment type="catalytic activity">
    <reaction evidence="2">
        <text>shikimate + NADP(+) = 3-dehydroshikimate + NADPH + H(+)</text>
        <dbReference type="Rhea" id="RHEA:17737"/>
        <dbReference type="ChEBI" id="CHEBI:15378"/>
        <dbReference type="ChEBI" id="CHEBI:16630"/>
        <dbReference type="ChEBI" id="CHEBI:36208"/>
        <dbReference type="ChEBI" id="CHEBI:57783"/>
        <dbReference type="ChEBI" id="CHEBI:58349"/>
        <dbReference type="EC" id="1.1.1.25"/>
    </reaction>
</comment>
<comment type="biophysicochemical properties">
    <kinetics>
        <KM evidence="2">234 uM for shikimate</KM>
        <KM evidence="2">234 uM for NADP(+)</KM>
        <text evidence="2">kcat is 0.2 sec(-1).</text>
    </kinetics>
    <phDependence>
        <text evidence="2">Optimum pH is 8.8.</text>
    </phDependence>
</comment>
<comment type="subunit">
    <text evidence="2">Homodimer.</text>
</comment>
<comment type="similarity">
    <text evidence="5 6">Belongs to the shikimate dehydrogenase-like family.</text>
</comment>
<reference key="1">
    <citation type="journal article" date="1995" name="Science">
        <title>Whole-genome random sequencing and assembly of Haemophilus influenzae Rd.</title>
        <authorList>
            <person name="Fleischmann R.D."/>
            <person name="Adams M.D."/>
            <person name="White O."/>
            <person name="Clayton R.A."/>
            <person name="Kirkness E.F."/>
            <person name="Kerlavage A.R."/>
            <person name="Bult C.J."/>
            <person name="Tomb J.-F."/>
            <person name="Dougherty B.A."/>
            <person name="Merrick J.M."/>
            <person name="McKenney K."/>
            <person name="Sutton G.G."/>
            <person name="FitzHugh W."/>
            <person name="Fields C.A."/>
            <person name="Gocayne J.D."/>
            <person name="Scott J.D."/>
            <person name="Shirley R."/>
            <person name="Liu L.-I."/>
            <person name="Glodek A."/>
            <person name="Kelley J.M."/>
            <person name="Weidman J.F."/>
            <person name="Phillips C.A."/>
            <person name="Spriggs T."/>
            <person name="Hedblom E."/>
            <person name="Cotton M.D."/>
            <person name="Utterback T.R."/>
            <person name="Hanna M.C."/>
            <person name="Nguyen D.T."/>
            <person name="Saudek D.M."/>
            <person name="Brandon R.C."/>
            <person name="Fine L.D."/>
            <person name="Fritchman J.L."/>
            <person name="Fuhrmann J.L."/>
            <person name="Geoghagen N.S.M."/>
            <person name="Gnehm C.L."/>
            <person name="McDonald L.A."/>
            <person name="Small K.V."/>
            <person name="Fraser C.M."/>
            <person name="Smith H.O."/>
            <person name="Venter J.C."/>
        </authorList>
    </citation>
    <scope>NUCLEOTIDE SEQUENCE [LARGE SCALE GENOMIC DNA]</scope>
    <source>
        <strain>ATCC 51907 / DSM 11121 / KW20 / Rd</strain>
    </source>
</reference>
<reference key="2">
    <citation type="journal article" date="2015" name="Arch. Biochem. Biophys.">
        <title>The shikimate dehydrogenase family: functional diversity within a conserved structural and mechanistic framework.</title>
        <authorList>
            <person name="Peek J."/>
            <person name="Christendat D."/>
        </authorList>
    </citation>
    <scope>REVIEW</scope>
    <scope>REACTION MECHANISM</scope>
    <scope>ACTIVE SITE</scope>
</reference>
<reference key="3">
    <citation type="journal article" date="2005" name="J. Biol. Chem.">
        <title>Crystal structure of a novel shikimate dehydrogenase from Haemophilus influenzae.</title>
        <authorList>
            <person name="Singh S."/>
            <person name="Korolev S."/>
            <person name="Koroleva O."/>
            <person name="Zarembinski T."/>
            <person name="Collart F."/>
            <person name="Joachimiak A."/>
            <person name="Christendat D."/>
        </authorList>
    </citation>
    <scope>X-RAY CRYSTALLOGRAPHY (1.75 ANGSTROMS)</scope>
    <scope>FUNCTION</scope>
    <scope>CATALYTIC ACTIVITY</scope>
    <scope>BIOPHYSICOCHEMICAL PROPERTIES</scope>
    <scope>SUBSTRATE SPECIFICITY</scope>
    <scope>MUTAGENESIS OF LYS-67 AND ASP-103</scope>
    <scope>SUBUNIT</scope>
</reference>
<sequence length="271" mass="29932">MINKDTQLCMSLSGRPSNFGTTFHNYLYDKLGLNFIYKAFTTQDIEHAIKGVRALGIRGCAVSMPFKETCMPFLDEIHPSAQAIESVNTIVNDNGFLRAYNTDYIAIVKLIEKYHLNKNAKVIVHGSGGMAKAVVAAFKNSGFEKLKIYARNVKTGQYLAALYGYAYINSLENQQADILVNVTSIGMKGGKEEMDLAFPKAFIDNASVAFDVVAMPVETPFIRYAQARGKQTISGAAVIVLQAVEQFELYTHQRPSDELIAEAAAFARTKF</sequence>
<name>SHDHL_HAEIN</name>
<feature type="chain" id="PRO_0000136073" description="Shikimate dehydrogenase-like protein HI_0607">
    <location>
        <begin position="1"/>
        <end position="271"/>
    </location>
</feature>
<feature type="active site" description="Proton donor/acceptor" evidence="6">
    <location>
        <position position="67"/>
    </location>
</feature>
<feature type="binding site" evidence="6">
    <location>
        <position position="103"/>
    </location>
    <ligand>
        <name>substrate</name>
    </ligand>
</feature>
<feature type="binding site" evidence="1">
    <location>
        <begin position="126"/>
        <end position="130"/>
    </location>
    <ligand>
        <name>NADP(+)</name>
        <dbReference type="ChEBI" id="CHEBI:58349"/>
    </ligand>
</feature>
<feature type="binding site" evidence="1">
    <location>
        <position position="154"/>
    </location>
    <ligand>
        <name>NADP(+)</name>
        <dbReference type="ChEBI" id="CHEBI:58349"/>
    </ligand>
</feature>
<feature type="binding site" evidence="1">
    <location>
        <position position="184"/>
    </location>
    <ligand>
        <name>NADP(+)</name>
        <dbReference type="ChEBI" id="CHEBI:58349"/>
    </ligand>
</feature>
<feature type="mutagenesis site" description="Loss of activity." evidence="2">
    <original>K</original>
    <variation>A</variation>
    <variation>H</variation>
    <variation>N</variation>
    <location>
        <position position="67"/>
    </location>
</feature>
<feature type="mutagenesis site" description="Loss of activity." evidence="2">
    <original>D</original>
    <variation>A</variation>
    <variation>N</variation>
    <location>
        <position position="103"/>
    </location>
</feature>
<feature type="strand" evidence="7">
    <location>
        <begin position="7"/>
        <end position="12"/>
    </location>
</feature>
<feature type="helix" evidence="7">
    <location>
        <begin position="19"/>
        <end position="31"/>
    </location>
</feature>
<feature type="strand" evidence="7">
    <location>
        <begin position="35"/>
        <end position="40"/>
    </location>
</feature>
<feature type="helix" evidence="7">
    <location>
        <begin position="45"/>
        <end position="55"/>
    </location>
</feature>
<feature type="strand" evidence="7">
    <location>
        <begin position="59"/>
        <end position="62"/>
    </location>
</feature>
<feature type="turn" evidence="7">
    <location>
        <begin position="67"/>
        <end position="70"/>
    </location>
</feature>
<feature type="helix" evidence="7">
    <location>
        <begin position="71"/>
        <end position="73"/>
    </location>
</feature>
<feature type="strand" evidence="7">
    <location>
        <begin position="75"/>
        <end position="77"/>
    </location>
</feature>
<feature type="helix" evidence="7">
    <location>
        <begin position="79"/>
        <end position="82"/>
    </location>
</feature>
<feature type="turn" evidence="7">
    <location>
        <begin position="83"/>
        <end position="85"/>
    </location>
</feature>
<feature type="strand" evidence="7">
    <location>
        <begin position="89"/>
        <end position="93"/>
    </location>
</feature>
<feature type="strand" evidence="7">
    <location>
        <begin position="96"/>
        <end position="100"/>
    </location>
</feature>
<feature type="helix" evidence="7">
    <location>
        <begin position="102"/>
        <end position="113"/>
    </location>
</feature>
<feature type="strand" evidence="7">
    <location>
        <begin position="122"/>
        <end position="125"/>
    </location>
</feature>
<feature type="helix" evidence="7">
    <location>
        <begin position="131"/>
        <end position="140"/>
    </location>
</feature>
<feature type="strand" evidence="7">
    <location>
        <begin position="146"/>
        <end position="149"/>
    </location>
</feature>
<feature type="helix" evidence="7">
    <location>
        <begin position="153"/>
        <end position="163"/>
    </location>
</feature>
<feature type="strand" evidence="7">
    <location>
        <begin position="166"/>
        <end position="169"/>
    </location>
</feature>
<feature type="strand" evidence="7">
    <location>
        <begin position="177"/>
        <end position="181"/>
    </location>
</feature>
<feature type="turn" evidence="7">
    <location>
        <begin position="191"/>
        <end position="194"/>
    </location>
</feature>
<feature type="helix" evidence="7">
    <location>
        <begin position="200"/>
        <end position="205"/>
    </location>
</feature>
<feature type="strand" evidence="7">
    <location>
        <begin position="207"/>
        <end position="211"/>
    </location>
</feature>
<feature type="strand" evidence="7">
    <location>
        <begin position="215"/>
        <end position="218"/>
    </location>
</feature>
<feature type="helix" evidence="7">
    <location>
        <begin position="220"/>
        <end position="227"/>
    </location>
</feature>
<feature type="strand" evidence="7">
    <location>
        <begin position="231"/>
        <end position="233"/>
    </location>
</feature>
<feature type="helix" evidence="7">
    <location>
        <begin position="235"/>
        <end position="251"/>
    </location>
</feature>
<feature type="helix" evidence="7">
    <location>
        <begin position="257"/>
        <end position="268"/>
    </location>
</feature>
<proteinExistence type="evidence at protein level"/>
<evidence type="ECO:0000250" key="1">
    <source>
        <dbReference type="UniProtKB" id="P43876"/>
    </source>
</evidence>
<evidence type="ECO:0000269" key="2">
    <source>
    </source>
</evidence>
<evidence type="ECO:0000303" key="3">
    <source>
    </source>
</evidence>
<evidence type="ECO:0000303" key="4">
    <source>
    </source>
</evidence>
<evidence type="ECO:0000305" key="5">
    <source>
    </source>
</evidence>
<evidence type="ECO:0000305" key="6">
    <source>
    </source>
</evidence>
<evidence type="ECO:0007829" key="7">
    <source>
        <dbReference type="PDB" id="1NPY"/>
    </source>
</evidence>
<organism>
    <name type="scientific">Haemophilus influenzae (strain ATCC 51907 / DSM 11121 / KW20 / Rd)</name>
    <dbReference type="NCBI Taxonomy" id="71421"/>
    <lineage>
        <taxon>Bacteria</taxon>
        <taxon>Pseudomonadati</taxon>
        <taxon>Pseudomonadota</taxon>
        <taxon>Gammaproteobacteria</taxon>
        <taxon>Pasteurellales</taxon>
        <taxon>Pasteurellaceae</taxon>
        <taxon>Haemophilus</taxon>
    </lineage>
</organism>
<gene>
    <name evidence="4" type="primary">sdhL</name>
    <name type="ordered locus">HI_0607</name>
</gene>
<dbReference type="EC" id="1.1.1.25" evidence="2"/>
<dbReference type="EMBL" id="L42023">
    <property type="protein sequence ID" value="AAC22266.1"/>
    <property type="molecule type" value="Genomic_DNA"/>
</dbReference>
<dbReference type="PIR" id="H64080">
    <property type="entry name" value="H64080"/>
</dbReference>
<dbReference type="RefSeq" id="NP_438765.1">
    <property type="nucleotide sequence ID" value="NC_000907.1"/>
</dbReference>
<dbReference type="PDB" id="1NPY">
    <property type="method" value="X-ray"/>
    <property type="resolution" value="1.75 A"/>
    <property type="chains" value="A/B/C/D=1-271"/>
</dbReference>
<dbReference type="PDBsum" id="1NPY"/>
<dbReference type="SMR" id="P44774"/>
<dbReference type="STRING" id="71421.HI_0607"/>
<dbReference type="EnsemblBacteria" id="AAC22266">
    <property type="protein sequence ID" value="AAC22266"/>
    <property type="gene ID" value="HI_0607"/>
</dbReference>
<dbReference type="KEGG" id="hin:HI_0607"/>
<dbReference type="PATRIC" id="fig|71421.8.peg.631"/>
<dbReference type="eggNOG" id="COG0169">
    <property type="taxonomic scope" value="Bacteria"/>
</dbReference>
<dbReference type="HOGENOM" id="CLU_044063_3_0_6"/>
<dbReference type="OrthoDB" id="9792692at2"/>
<dbReference type="PhylomeDB" id="P44774"/>
<dbReference type="BioCyc" id="HINF71421:G1GJ1-626-MONOMER"/>
<dbReference type="BRENDA" id="1.1.1.282">
    <property type="organism ID" value="2529"/>
</dbReference>
<dbReference type="EvolutionaryTrace" id="P44774"/>
<dbReference type="Proteomes" id="UP000000579">
    <property type="component" value="Chromosome"/>
</dbReference>
<dbReference type="GO" id="GO:0005829">
    <property type="term" value="C:cytosol"/>
    <property type="evidence" value="ECO:0000318"/>
    <property type="project" value="GO_Central"/>
</dbReference>
<dbReference type="GO" id="GO:0050661">
    <property type="term" value="F:NADP binding"/>
    <property type="evidence" value="ECO:0000318"/>
    <property type="project" value="GO_Central"/>
</dbReference>
<dbReference type="GO" id="GO:0004764">
    <property type="term" value="F:shikimate 3-dehydrogenase (NADP+) activity"/>
    <property type="evidence" value="ECO:0000318"/>
    <property type="project" value="GO_Central"/>
</dbReference>
<dbReference type="GO" id="GO:0009423">
    <property type="term" value="P:chorismate biosynthetic process"/>
    <property type="evidence" value="ECO:0000318"/>
    <property type="project" value="GO_Central"/>
</dbReference>
<dbReference type="GO" id="GO:0019632">
    <property type="term" value="P:shikimate metabolic process"/>
    <property type="evidence" value="ECO:0000318"/>
    <property type="project" value="GO_Central"/>
</dbReference>
<dbReference type="CDD" id="cd01065">
    <property type="entry name" value="NAD_bind_Shikimate_DH"/>
    <property type="match status" value="1"/>
</dbReference>
<dbReference type="FunFam" id="3.40.50.10860:FF:000014">
    <property type="entry name" value="Shikimate 5-dehydrogenase"/>
    <property type="match status" value="1"/>
</dbReference>
<dbReference type="FunFam" id="3.40.50.720:FF:000333">
    <property type="entry name" value="Shikimate 5-dehydrogenase"/>
    <property type="match status" value="1"/>
</dbReference>
<dbReference type="Gene3D" id="3.40.50.10860">
    <property type="entry name" value="Leucine Dehydrogenase, chain A, domain 1"/>
    <property type="match status" value="1"/>
</dbReference>
<dbReference type="Gene3D" id="3.40.50.720">
    <property type="entry name" value="NAD(P)-binding Rossmann-like Domain"/>
    <property type="match status" value="1"/>
</dbReference>
<dbReference type="InterPro" id="IPR046346">
    <property type="entry name" value="Aminoacid_DH-like_N_sf"/>
</dbReference>
<dbReference type="InterPro" id="IPR036291">
    <property type="entry name" value="NAD(P)-bd_dom_sf"/>
</dbReference>
<dbReference type="InterPro" id="IPR013708">
    <property type="entry name" value="Shikimate_DH-bd_N"/>
</dbReference>
<dbReference type="InterPro" id="IPR022893">
    <property type="entry name" value="Shikimate_DH_fam"/>
</dbReference>
<dbReference type="NCBIfam" id="NF009202">
    <property type="entry name" value="PRK12550.1"/>
    <property type="match status" value="1"/>
</dbReference>
<dbReference type="PANTHER" id="PTHR21089">
    <property type="entry name" value="SHIKIMATE DEHYDROGENASE"/>
    <property type="match status" value="1"/>
</dbReference>
<dbReference type="PANTHER" id="PTHR21089:SF9">
    <property type="entry name" value="SHIKIMATE DEHYDROGENASE-LIKE PROTEIN HI_0607"/>
    <property type="match status" value="1"/>
</dbReference>
<dbReference type="Pfam" id="PF08501">
    <property type="entry name" value="Shikimate_dh_N"/>
    <property type="match status" value="1"/>
</dbReference>
<dbReference type="SUPFAM" id="SSF53223">
    <property type="entry name" value="Aminoacid dehydrogenase-like, N-terminal domain"/>
    <property type="match status" value="1"/>
</dbReference>
<dbReference type="SUPFAM" id="SSF51735">
    <property type="entry name" value="NAD(P)-binding Rossmann-fold domains"/>
    <property type="match status" value="1"/>
</dbReference>
<keyword id="KW-0002">3D-structure</keyword>
<keyword id="KW-0521">NADP</keyword>
<keyword id="KW-0560">Oxidoreductase</keyword>
<keyword id="KW-1185">Reference proteome</keyword>
<protein>
    <recommendedName>
        <fullName evidence="3">Shikimate dehydrogenase-like protein HI_0607</fullName>
        <shortName evidence="3">SDH-L</shortName>
        <ecNumber evidence="2">1.1.1.25</ecNumber>
    </recommendedName>
</protein>
<accession>P44774</accession>